<protein>
    <recommendedName>
        <fullName>Serine/threonine-protein kinase N2</fullName>
        <ecNumber>2.7.11.13</ecNumber>
    </recommendedName>
    <alternativeName>
        <fullName>Cardiolipin-activated protein kinase Pak2</fullName>
    </alternativeName>
    <alternativeName>
        <fullName>PKN gamma</fullName>
    </alternativeName>
    <alternativeName>
        <fullName>Protease-activated kinase 2</fullName>
        <shortName>PAK-2</shortName>
    </alternativeName>
    <alternativeName>
        <fullName>Protein kinase C-like 2</fullName>
    </alternativeName>
    <alternativeName>
        <fullName>Protein-kinase C-related kinase 2</fullName>
    </alternativeName>
    <alternativeName>
        <fullName>p140 kinase</fullName>
    </alternativeName>
</protein>
<dbReference type="EC" id="2.7.11.13"/>
<dbReference type="EMBL" id="AABR03012350">
    <property type="status" value="NOT_ANNOTATED_CDS"/>
    <property type="molecule type" value="Genomic_DNA"/>
</dbReference>
<dbReference type="EMBL" id="AABR03012657">
    <property type="status" value="NOT_ANNOTATED_CDS"/>
    <property type="molecule type" value="Genomic_DNA"/>
</dbReference>
<dbReference type="EMBL" id="U75358">
    <property type="protein sequence ID" value="AAB53364.1"/>
    <property type="molecule type" value="mRNA"/>
</dbReference>
<dbReference type="SMR" id="O08874"/>
<dbReference type="FunCoup" id="O08874">
    <property type="interactions" value="3225"/>
</dbReference>
<dbReference type="IntAct" id="O08874">
    <property type="interactions" value="2"/>
</dbReference>
<dbReference type="MINT" id="O08874"/>
<dbReference type="STRING" id="10116.ENSRNOP00000034133"/>
<dbReference type="iPTMnet" id="O08874"/>
<dbReference type="PhosphoSitePlus" id="O08874"/>
<dbReference type="jPOST" id="O08874"/>
<dbReference type="PaxDb" id="10116-ENSRNOP00000034133"/>
<dbReference type="UCSC" id="RGD:620146">
    <property type="organism name" value="rat"/>
</dbReference>
<dbReference type="AGR" id="RGD:620146"/>
<dbReference type="RGD" id="620146">
    <property type="gene designation" value="Pkn2"/>
</dbReference>
<dbReference type="eggNOG" id="KOG0694">
    <property type="taxonomic scope" value="Eukaryota"/>
</dbReference>
<dbReference type="InParanoid" id="O08874"/>
<dbReference type="PhylomeDB" id="O08874"/>
<dbReference type="Reactome" id="R-RNO-5625740">
    <property type="pathway name" value="RHO GTPases activate PKNs"/>
</dbReference>
<dbReference type="Reactome" id="R-RNO-8980692">
    <property type="pathway name" value="RHOA GTPase cycle"/>
</dbReference>
<dbReference type="Reactome" id="R-RNO-9013026">
    <property type="pathway name" value="RHOB GTPase cycle"/>
</dbReference>
<dbReference type="Reactome" id="R-RNO-9013149">
    <property type="pathway name" value="RAC1 GTPase cycle"/>
</dbReference>
<dbReference type="Reactome" id="R-RNO-9856530">
    <property type="pathway name" value="High laminar flow shear stress activates signaling by PIEZO1 and PECAM1:CDH5:KDR in endothelial cells"/>
</dbReference>
<dbReference type="PRO" id="PR:O08874"/>
<dbReference type="Proteomes" id="UP000002494">
    <property type="component" value="Unplaced"/>
</dbReference>
<dbReference type="GO" id="GO:0043296">
    <property type="term" value="C:apical junction complex"/>
    <property type="evidence" value="ECO:0000250"/>
    <property type="project" value="UniProtKB"/>
</dbReference>
<dbReference type="GO" id="GO:0032154">
    <property type="term" value="C:cleavage furrow"/>
    <property type="evidence" value="ECO:0000250"/>
    <property type="project" value="UniProtKB"/>
</dbReference>
<dbReference type="GO" id="GO:0005737">
    <property type="term" value="C:cytoplasm"/>
    <property type="evidence" value="ECO:0000250"/>
    <property type="project" value="UniProtKB"/>
</dbReference>
<dbReference type="GO" id="GO:0005856">
    <property type="term" value="C:cytoskeleton"/>
    <property type="evidence" value="ECO:0007669"/>
    <property type="project" value="UniProtKB-SubCell"/>
</dbReference>
<dbReference type="GO" id="GO:0030027">
    <property type="term" value="C:lamellipodium"/>
    <property type="evidence" value="ECO:0000250"/>
    <property type="project" value="UniProtKB"/>
</dbReference>
<dbReference type="GO" id="GO:0030496">
    <property type="term" value="C:midbody"/>
    <property type="evidence" value="ECO:0000250"/>
    <property type="project" value="UniProtKB"/>
</dbReference>
<dbReference type="GO" id="GO:0005634">
    <property type="term" value="C:nucleus"/>
    <property type="evidence" value="ECO:0000250"/>
    <property type="project" value="UniProtKB"/>
</dbReference>
<dbReference type="GO" id="GO:0048471">
    <property type="term" value="C:perinuclear region of cytoplasm"/>
    <property type="evidence" value="ECO:0000266"/>
    <property type="project" value="RGD"/>
</dbReference>
<dbReference type="GO" id="GO:0032991">
    <property type="term" value="C:protein-containing complex"/>
    <property type="evidence" value="ECO:0000266"/>
    <property type="project" value="RGD"/>
</dbReference>
<dbReference type="GO" id="GO:0005524">
    <property type="term" value="F:ATP binding"/>
    <property type="evidence" value="ECO:0007669"/>
    <property type="project" value="UniProtKB-KW"/>
</dbReference>
<dbReference type="GO" id="GO:0004697">
    <property type="term" value="F:diacylglycerol-dependent serine/threonine kinase activity"/>
    <property type="evidence" value="ECO:0007669"/>
    <property type="project" value="UniProtKB-EC"/>
</dbReference>
<dbReference type="GO" id="GO:0042826">
    <property type="term" value="F:histone deacetylase binding"/>
    <property type="evidence" value="ECO:0000250"/>
    <property type="project" value="UniProtKB"/>
</dbReference>
<dbReference type="GO" id="GO:0016301">
    <property type="term" value="F:kinase activity"/>
    <property type="evidence" value="ECO:0000266"/>
    <property type="project" value="RGD"/>
</dbReference>
<dbReference type="GO" id="GO:0106310">
    <property type="term" value="F:protein serine kinase activity"/>
    <property type="evidence" value="ECO:0007669"/>
    <property type="project" value="RHEA"/>
</dbReference>
<dbReference type="GO" id="GO:0004674">
    <property type="term" value="F:protein serine/threonine kinase activity"/>
    <property type="evidence" value="ECO:0000314"/>
    <property type="project" value="RGD"/>
</dbReference>
<dbReference type="GO" id="GO:0070063">
    <property type="term" value="F:RNA polymerase binding"/>
    <property type="evidence" value="ECO:0000266"/>
    <property type="project" value="RGD"/>
</dbReference>
<dbReference type="GO" id="GO:0031267">
    <property type="term" value="F:small GTPase binding"/>
    <property type="evidence" value="ECO:0007669"/>
    <property type="project" value="InterPro"/>
</dbReference>
<dbReference type="GO" id="GO:0043297">
    <property type="term" value="P:apical junction assembly"/>
    <property type="evidence" value="ECO:0000250"/>
    <property type="project" value="UniProtKB"/>
</dbReference>
<dbReference type="GO" id="GO:0006915">
    <property type="term" value="P:apoptotic process"/>
    <property type="evidence" value="ECO:0007669"/>
    <property type="project" value="UniProtKB-KW"/>
</dbReference>
<dbReference type="GO" id="GO:0007155">
    <property type="term" value="P:cell adhesion"/>
    <property type="evidence" value="ECO:0007669"/>
    <property type="project" value="UniProtKB-KW"/>
</dbReference>
<dbReference type="GO" id="GO:0051301">
    <property type="term" value="P:cell division"/>
    <property type="evidence" value="ECO:0007669"/>
    <property type="project" value="UniProtKB-KW"/>
</dbReference>
<dbReference type="GO" id="GO:0030030">
    <property type="term" value="P:cell projection organization"/>
    <property type="evidence" value="ECO:0007669"/>
    <property type="project" value="UniProtKB-KW"/>
</dbReference>
<dbReference type="GO" id="GO:0010631">
    <property type="term" value="P:epithelial cell migration"/>
    <property type="evidence" value="ECO:0000250"/>
    <property type="project" value="UniProtKB"/>
</dbReference>
<dbReference type="GO" id="GO:0035556">
    <property type="term" value="P:intracellular signal transduction"/>
    <property type="evidence" value="ECO:0000318"/>
    <property type="project" value="GO_Central"/>
</dbReference>
<dbReference type="GO" id="GO:0032467">
    <property type="term" value="P:positive regulation of cytokinesis"/>
    <property type="evidence" value="ECO:0000250"/>
    <property type="project" value="UniProtKB"/>
</dbReference>
<dbReference type="GO" id="GO:0045931">
    <property type="term" value="P:positive regulation of mitotic cell cycle"/>
    <property type="evidence" value="ECO:0000250"/>
    <property type="project" value="UniProtKB"/>
</dbReference>
<dbReference type="GO" id="GO:0045070">
    <property type="term" value="P:positive regulation of viral genome replication"/>
    <property type="evidence" value="ECO:0000266"/>
    <property type="project" value="RGD"/>
</dbReference>
<dbReference type="GO" id="GO:0006468">
    <property type="term" value="P:protein phosphorylation"/>
    <property type="evidence" value="ECO:0000250"/>
    <property type="project" value="UniProtKB"/>
</dbReference>
<dbReference type="GO" id="GO:2000145">
    <property type="term" value="P:regulation of cell motility"/>
    <property type="evidence" value="ECO:0000250"/>
    <property type="project" value="UniProtKB"/>
</dbReference>
<dbReference type="CDD" id="cd08687">
    <property type="entry name" value="C2_PKN-like"/>
    <property type="match status" value="1"/>
</dbReference>
<dbReference type="CDD" id="cd11631">
    <property type="entry name" value="HR1_PKN2_2"/>
    <property type="match status" value="1"/>
</dbReference>
<dbReference type="CDD" id="cd11622">
    <property type="entry name" value="HR1_PKN_1"/>
    <property type="match status" value="1"/>
</dbReference>
<dbReference type="CDD" id="cd05589">
    <property type="entry name" value="STKc_PKN"/>
    <property type="match status" value="1"/>
</dbReference>
<dbReference type="FunFam" id="1.10.287.160:FF:000001">
    <property type="entry name" value="Putative serine/threonine-protein kinase N2"/>
    <property type="match status" value="1"/>
</dbReference>
<dbReference type="FunFam" id="1.10.287.160:FF:000002">
    <property type="entry name" value="Putative serine/threonine-protein kinase N2"/>
    <property type="match status" value="1"/>
</dbReference>
<dbReference type="FunFam" id="1.10.287.160:FF:000003">
    <property type="entry name" value="Putative serine/threonine-protein kinase N2"/>
    <property type="match status" value="1"/>
</dbReference>
<dbReference type="FunFam" id="3.30.200.20:FF:000478">
    <property type="entry name" value="Serine/threonine-protein kinase N2"/>
    <property type="match status" value="1"/>
</dbReference>
<dbReference type="FunFam" id="1.10.510.10:FF:000038">
    <property type="entry name" value="serine/threonine-protein kinase N2 isoform X1"/>
    <property type="match status" value="1"/>
</dbReference>
<dbReference type="Gene3D" id="1.10.287.160">
    <property type="entry name" value="HR1 repeat"/>
    <property type="match status" value="3"/>
</dbReference>
<dbReference type="Gene3D" id="3.30.200.20">
    <property type="entry name" value="Phosphorylase Kinase, domain 1"/>
    <property type="match status" value="1"/>
</dbReference>
<dbReference type="Gene3D" id="1.10.510.10">
    <property type="entry name" value="Transferase(Phosphotransferase) domain 1"/>
    <property type="match status" value="1"/>
</dbReference>
<dbReference type="InterPro" id="IPR000961">
    <property type="entry name" value="AGC-kinase_C"/>
</dbReference>
<dbReference type="InterPro" id="IPR000008">
    <property type="entry name" value="C2_dom"/>
</dbReference>
<dbReference type="InterPro" id="IPR035892">
    <property type="entry name" value="C2_domain_sf"/>
</dbReference>
<dbReference type="InterPro" id="IPR037784">
    <property type="entry name" value="C2_PKN"/>
</dbReference>
<dbReference type="InterPro" id="IPR011072">
    <property type="entry name" value="HR1_rho-bd"/>
</dbReference>
<dbReference type="InterPro" id="IPR036274">
    <property type="entry name" value="HR1_rpt_sf"/>
</dbReference>
<dbReference type="InterPro" id="IPR011009">
    <property type="entry name" value="Kinase-like_dom_sf"/>
</dbReference>
<dbReference type="InterPro" id="IPR017892">
    <property type="entry name" value="Pkinase_C"/>
</dbReference>
<dbReference type="InterPro" id="IPR037313">
    <property type="entry name" value="PKN_HR1_1"/>
</dbReference>
<dbReference type="InterPro" id="IPR000719">
    <property type="entry name" value="Prot_kinase_dom"/>
</dbReference>
<dbReference type="InterPro" id="IPR017441">
    <property type="entry name" value="Protein_kinase_ATP_BS"/>
</dbReference>
<dbReference type="InterPro" id="IPR008271">
    <property type="entry name" value="Ser/Thr_kinase_AS"/>
</dbReference>
<dbReference type="PANTHER" id="PTHR24351">
    <property type="entry name" value="RIBOSOMAL PROTEIN S6 KINASE"/>
    <property type="match status" value="1"/>
</dbReference>
<dbReference type="Pfam" id="PF02185">
    <property type="entry name" value="HR1"/>
    <property type="match status" value="3"/>
</dbReference>
<dbReference type="Pfam" id="PF00069">
    <property type="entry name" value="Pkinase"/>
    <property type="match status" value="1"/>
</dbReference>
<dbReference type="Pfam" id="PF00433">
    <property type="entry name" value="Pkinase_C"/>
    <property type="match status" value="1"/>
</dbReference>
<dbReference type="SMART" id="SM00742">
    <property type="entry name" value="Hr1"/>
    <property type="match status" value="3"/>
</dbReference>
<dbReference type="SMART" id="SM00133">
    <property type="entry name" value="S_TK_X"/>
    <property type="match status" value="1"/>
</dbReference>
<dbReference type="SMART" id="SM00220">
    <property type="entry name" value="S_TKc"/>
    <property type="match status" value="1"/>
</dbReference>
<dbReference type="SUPFAM" id="SSF49562">
    <property type="entry name" value="C2 domain (Calcium/lipid-binding domain, CaLB)"/>
    <property type="match status" value="1"/>
</dbReference>
<dbReference type="SUPFAM" id="SSF46585">
    <property type="entry name" value="HR1 repeat"/>
    <property type="match status" value="3"/>
</dbReference>
<dbReference type="SUPFAM" id="SSF56112">
    <property type="entry name" value="Protein kinase-like (PK-like)"/>
    <property type="match status" value="1"/>
</dbReference>
<dbReference type="PROSITE" id="PS51285">
    <property type="entry name" value="AGC_KINASE_CTER"/>
    <property type="match status" value="1"/>
</dbReference>
<dbReference type="PROSITE" id="PS50004">
    <property type="entry name" value="C2"/>
    <property type="match status" value="1"/>
</dbReference>
<dbReference type="PROSITE" id="PS00107">
    <property type="entry name" value="PROTEIN_KINASE_ATP"/>
    <property type="match status" value="1"/>
</dbReference>
<dbReference type="PROSITE" id="PS50011">
    <property type="entry name" value="PROTEIN_KINASE_DOM"/>
    <property type="match status" value="1"/>
</dbReference>
<dbReference type="PROSITE" id="PS00108">
    <property type="entry name" value="PROTEIN_KINASE_ST"/>
    <property type="match status" value="1"/>
</dbReference>
<dbReference type="PROSITE" id="PS51860">
    <property type="entry name" value="REM_1"/>
    <property type="match status" value="3"/>
</dbReference>
<evidence type="ECO:0000250" key="1"/>
<evidence type="ECO:0000250" key="2">
    <source>
        <dbReference type="UniProtKB" id="Q16513"/>
    </source>
</evidence>
<evidence type="ECO:0000250" key="3">
    <source>
        <dbReference type="UniProtKB" id="Q8BWW9"/>
    </source>
</evidence>
<evidence type="ECO:0000255" key="4">
    <source>
        <dbReference type="PROSITE-ProRule" id="PRU00041"/>
    </source>
</evidence>
<evidence type="ECO:0000255" key="5">
    <source>
        <dbReference type="PROSITE-ProRule" id="PRU00159"/>
    </source>
</evidence>
<evidence type="ECO:0000255" key="6">
    <source>
        <dbReference type="PROSITE-ProRule" id="PRU00618"/>
    </source>
</evidence>
<evidence type="ECO:0000255" key="7">
    <source>
        <dbReference type="PROSITE-ProRule" id="PRU01207"/>
    </source>
</evidence>
<evidence type="ECO:0000255" key="8">
    <source>
        <dbReference type="PROSITE-ProRule" id="PRU10027"/>
    </source>
</evidence>
<evidence type="ECO:0000256" key="9">
    <source>
        <dbReference type="SAM" id="MobiDB-lite"/>
    </source>
</evidence>
<evidence type="ECO:0000269" key="10">
    <source>
    </source>
</evidence>
<evidence type="ECO:0000269" key="11">
    <source>
    </source>
</evidence>
<evidence type="ECO:0000305" key="12"/>
<evidence type="ECO:0007744" key="13">
    <source>
    </source>
</evidence>
<sequence>MASNPDRGEILLTELQVDSRPLPFSENVSAVQKLDFSDTIVQQKLDDVKDRIKREIRKELKIKEGAENLRKVTTDKKNLAYVDNILKKSNKKLEELHHKLQELNAHIVVSDPEDYTDCPRTPDTPNSDSRSSTSNNRRLMALQKQLDIELKVKQGAENMIQMYSNGPSKDRKLHGTAQQLLQDNKTKIEVIRMHILQAVLTNELAFDNAKPVISPLELRNGRIIEHHFRIEFAVAEGAKNVMKLLGSGKVTDRKALSEAQARFNESSQKLDLLKYSLEQRLNELPKNHPKSSVVIEELSLVASPTLSPRQSMLSTQNQYSTLSKPAALTGTLEVRLWGAKISWENVPGRSKATSVALPGWSPSENRSSFMSRTSKSKSGSSRNLLKTDDLSNDVCAVLKLDNTVVGQTIWKPISNQSWDQKFTLELDRSRELEISVYWRDWRSLCAVKFLRLEDFLDNQRHGMALYLEPQGTLFAEVTFFNPVIERRPKLQRQKKIFSKQQGKTFLRAPQMNINIATWGRLVRRAIPTVNHSGTFSPQTPVPATVPVVDARTPELAPPASDSTVTKLDFDLEPEAPPAPPRASSLGEIDDSSELRVLDIPGQGSETVFDIENDRNNMRPKSKSEYELNIPDSSRSCWSVGELEDKRSQQRFQFNLQDFRCCAVLGRGHFGKVLLAEYKHTNEMFAIKALKKGDIVARDEVDSLMCEKRIFETVNSVRHPFLVNLFACFQTKEHVCFVMEYAAGGDLMMHIHTDVFSEPRAVFYAACVVLGLQYLHEHKIVYRDLKLDNLLLDTEASVKIADFGLCKEGMGYGDRTSTFCGTPEFLAPEVLTETSYTRAVDWWGLGVLIYEMLVGESPFPGDDEEEVFDSIVNDEVRYPRFLSTEAISIMRRLLRRNPERRLGAGEKDAEDVKKHPFFRLTDWSALLDKKVKPPFVPTIRGREDVSNFDDEFTSEAPILTPPREPRILLEEEQEMFRDFDYVADWC</sequence>
<gene>
    <name type="primary">Pkn2</name>
    <name type="synonym">Pak2</name>
    <name type="synonym">Prk2</name>
    <name type="synonym">Prkcl2</name>
</gene>
<accession>O08874</accession>
<keyword id="KW-0007">Acetylation</keyword>
<keyword id="KW-0053">Apoptosis</keyword>
<keyword id="KW-0067">ATP-binding</keyword>
<keyword id="KW-0130">Cell adhesion</keyword>
<keyword id="KW-0131">Cell cycle</keyword>
<keyword id="KW-0132">Cell division</keyword>
<keyword id="KW-0965">Cell junction</keyword>
<keyword id="KW-0966">Cell projection</keyword>
<keyword id="KW-0970">Cilium biogenesis/degradation</keyword>
<keyword id="KW-0175">Coiled coil</keyword>
<keyword id="KW-0963">Cytoplasm</keyword>
<keyword id="KW-0206">Cytoskeleton</keyword>
<keyword id="KW-0903">Direct protein sequencing</keyword>
<keyword id="KW-0418">Kinase</keyword>
<keyword id="KW-0472">Membrane</keyword>
<keyword id="KW-0547">Nucleotide-binding</keyword>
<keyword id="KW-0539">Nucleus</keyword>
<keyword id="KW-0597">Phosphoprotein</keyword>
<keyword id="KW-1185">Reference proteome</keyword>
<keyword id="KW-0677">Repeat</keyword>
<keyword id="KW-0723">Serine/threonine-protein kinase</keyword>
<keyword id="KW-0804">Transcription</keyword>
<keyword id="KW-0805">Transcription regulation</keyword>
<keyword id="KW-0808">Transferase</keyword>
<proteinExistence type="evidence at protein level"/>
<organism>
    <name type="scientific">Rattus norvegicus</name>
    <name type="common">Rat</name>
    <dbReference type="NCBI Taxonomy" id="10116"/>
    <lineage>
        <taxon>Eukaryota</taxon>
        <taxon>Metazoa</taxon>
        <taxon>Chordata</taxon>
        <taxon>Craniata</taxon>
        <taxon>Vertebrata</taxon>
        <taxon>Euteleostomi</taxon>
        <taxon>Mammalia</taxon>
        <taxon>Eutheria</taxon>
        <taxon>Euarchontoglires</taxon>
        <taxon>Glires</taxon>
        <taxon>Rodentia</taxon>
        <taxon>Myomorpha</taxon>
        <taxon>Muroidea</taxon>
        <taxon>Muridae</taxon>
        <taxon>Murinae</taxon>
        <taxon>Rattus</taxon>
    </lineage>
</organism>
<reference key="1">
    <citation type="journal article" date="2004" name="Nature">
        <title>Genome sequence of the Brown Norway rat yields insights into mammalian evolution.</title>
        <authorList>
            <person name="Gibbs R.A."/>
            <person name="Weinstock G.M."/>
            <person name="Metzker M.L."/>
            <person name="Muzny D.M."/>
            <person name="Sodergren E.J."/>
            <person name="Scherer S."/>
            <person name="Scott G."/>
            <person name="Steffen D."/>
            <person name="Worley K.C."/>
            <person name="Burch P.E."/>
            <person name="Okwuonu G."/>
            <person name="Hines S."/>
            <person name="Lewis L."/>
            <person name="Deramo C."/>
            <person name="Delgado O."/>
            <person name="Dugan-Rocha S."/>
            <person name="Miner G."/>
            <person name="Morgan M."/>
            <person name="Hawes A."/>
            <person name="Gill R."/>
            <person name="Holt R.A."/>
            <person name="Adams M.D."/>
            <person name="Amanatides P.G."/>
            <person name="Baden-Tillson H."/>
            <person name="Barnstead M."/>
            <person name="Chin S."/>
            <person name="Evans C.A."/>
            <person name="Ferriera S."/>
            <person name="Fosler C."/>
            <person name="Glodek A."/>
            <person name="Gu Z."/>
            <person name="Jennings D."/>
            <person name="Kraft C.L."/>
            <person name="Nguyen T."/>
            <person name="Pfannkoch C.M."/>
            <person name="Sitter C."/>
            <person name="Sutton G.G."/>
            <person name="Venter J.C."/>
            <person name="Woodage T."/>
            <person name="Smith D."/>
            <person name="Lee H.-M."/>
            <person name="Gustafson E."/>
            <person name="Cahill P."/>
            <person name="Kana A."/>
            <person name="Doucette-Stamm L."/>
            <person name="Weinstock K."/>
            <person name="Fechtel K."/>
            <person name="Weiss R.B."/>
            <person name="Dunn D.M."/>
            <person name="Green E.D."/>
            <person name="Blakesley R.W."/>
            <person name="Bouffard G.G."/>
            <person name="De Jong P.J."/>
            <person name="Osoegawa K."/>
            <person name="Zhu B."/>
            <person name="Marra M."/>
            <person name="Schein J."/>
            <person name="Bosdet I."/>
            <person name="Fjell C."/>
            <person name="Jones S."/>
            <person name="Krzywinski M."/>
            <person name="Mathewson C."/>
            <person name="Siddiqui A."/>
            <person name="Wye N."/>
            <person name="McPherson J."/>
            <person name="Zhao S."/>
            <person name="Fraser C.M."/>
            <person name="Shetty J."/>
            <person name="Shatsman S."/>
            <person name="Geer K."/>
            <person name="Chen Y."/>
            <person name="Abramzon S."/>
            <person name="Nierman W.C."/>
            <person name="Havlak P.H."/>
            <person name="Chen R."/>
            <person name="Durbin K.J."/>
            <person name="Egan A."/>
            <person name="Ren Y."/>
            <person name="Song X.-Z."/>
            <person name="Li B."/>
            <person name="Liu Y."/>
            <person name="Qin X."/>
            <person name="Cawley S."/>
            <person name="Cooney A.J."/>
            <person name="D'Souza L.M."/>
            <person name="Martin K."/>
            <person name="Wu J.Q."/>
            <person name="Gonzalez-Garay M.L."/>
            <person name="Jackson A.R."/>
            <person name="Kalafus K.J."/>
            <person name="McLeod M.P."/>
            <person name="Milosavljevic A."/>
            <person name="Virk D."/>
            <person name="Volkov A."/>
            <person name="Wheeler D.A."/>
            <person name="Zhang Z."/>
            <person name="Bailey J.A."/>
            <person name="Eichler E.E."/>
            <person name="Tuzun E."/>
            <person name="Birney E."/>
            <person name="Mongin E."/>
            <person name="Ureta-Vidal A."/>
            <person name="Woodwark C."/>
            <person name="Zdobnov E."/>
            <person name="Bork P."/>
            <person name="Suyama M."/>
            <person name="Torrents D."/>
            <person name="Alexandersson M."/>
            <person name="Trask B.J."/>
            <person name="Young J.M."/>
            <person name="Huang H."/>
            <person name="Wang H."/>
            <person name="Xing H."/>
            <person name="Daniels S."/>
            <person name="Gietzen D."/>
            <person name="Schmidt J."/>
            <person name="Stevens K."/>
            <person name="Vitt U."/>
            <person name="Wingrove J."/>
            <person name="Camara F."/>
            <person name="Mar Alba M."/>
            <person name="Abril J.F."/>
            <person name="Guigo R."/>
            <person name="Smit A."/>
            <person name="Dubchak I."/>
            <person name="Rubin E.M."/>
            <person name="Couronne O."/>
            <person name="Poliakov A."/>
            <person name="Huebner N."/>
            <person name="Ganten D."/>
            <person name="Goesele C."/>
            <person name="Hummel O."/>
            <person name="Kreitler T."/>
            <person name="Lee Y.-A."/>
            <person name="Monti J."/>
            <person name="Schulz H."/>
            <person name="Zimdahl H."/>
            <person name="Himmelbauer H."/>
            <person name="Lehrach H."/>
            <person name="Jacob H.J."/>
            <person name="Bromberg S."/>
            <person name="Gullings-Handley J."/>
            <person name="Jensen-Seaman M.I."/>
            <person name="Kwitek A.E."/>
            <person name="Lazar J."/>
            <person name="Pasko D."/>
            <person name="Tonellato P.J."/>
            <person name="Twigger S."/>
            <person name="Ponting C.P."/>
            <person name="Duarte J.M."/>
            <person name="Rice S."/>
            <person name="Goodstadt L."/>
            <person name="Beatson S.A."/>
            <person name="Emes R.D."/>
            <person name="Winter E.E."/>
            <person name="Webber C."/>
            <person name="Brandt P."/>
            <person name="Nyakatura G."/>
            <person name="Adetobi M."/>
            <person name="Chiaromonte F."/>
            <person name="Elnitski L."/>
            <person name="Eswara P."/>
            <person name="Hardison R.C."/>
            <person name="Hou M."/>
            <person name="Kolbe D."/>
            <person name="Makova K."/>
            <person name="Miller W."/>
            <person name="Nekrutenko A."/>
            <person name="Riemer C."/>
            <person name="Schwartz S."/>
            <person name="Taylor J."/>
            <person name="Yang S."/>
            <person name="Zhang Y."/>
            <person name="Lindpaintner K."/>
            <person name="Andrews T.D."/>
            <person name="Caccamo M."/>
            <person name="Clamp M."/>
            <person name="Clarke L."/>
            <person name="Curwen V."/>
            <person name="Durbin R.M."/>
            <person name="Eyras E."/>
            <person name="Searle S.M."/>
            <person name="Cooper G.M."/>
            <person name="Batzoglou S."/>
            <person name="Brudno M."/>
            <person name="Sidow A."/>
            <person name="Stone E.A."/>
            <person name="Payseur B.A."/>
            <person name="Bourque G."/>
            <person name="Lopez-Otin C."/>
            <person name="Puente X.S."/>
            <person name="Chakrabarti K."/>
            <person name="Chatterji S."/>
            <person name="Dewey C."/>
            <person name="Pachter L."/>
            <person name="Bray N."/>
            <person name="Yap V.B."/>
            <person name="Caspi A."/>
            <person name="Tesler G."/>
            <person name="Pevzner P.A."/>
            <person name="Haussler D."/>
            <person name="Roskin K.M."/>
            <person name="Baertsch R."/>
            <person name="Clawson H."/>
            <person name="Furey T.S."/>
            <person name="Hinrichs A.S."/>
            <person name="Karolchik D."/>
            <person name="Kent W.J."/>
            <person name="Rosenbloom K.R."/>
            <person name="Trumbower H."/>
            <person name="Weirauch M."/>
            <person name="Cooper D.N."/>
            <person name="Stenson P.D."/>
            <person name="Ma B."/>
            <person name="Brent M."/>
            <person name="Arumugam M."/>
            <person name="Shteynberg D."/>
            <person name="Copley R.R."/>
            <person name="Taylor M.S."/>
            <person name="Riethman H."/>
            <person name="Mudunuri U."/>
            <person name="Peterson J."/>
            <person name="Guyer M."/>
            <person name="Felsenfeld A."/>
            <person name="Old S."/>
            <person name="Mockrin S."/>
            <person name="Collins F.S."/>
        </authorList>
    </citation>
    <scope>NUCLEOTIDE SEQUENCE [LARGE SCALE GENOMIC DNA]</scope>
    <source>
        <strain>Brown Norway</strain>
    </source>
</reference>
<reference key="2">
    <citation type="journal article" date="1997" name="J. Biol. Chem.">
        <title>Isolation and characterization of a structural homologue of human PRK2 from rat liver: distinguishing substrate and lipid activator specificities.</title>
        <authorList>
            <person name="Yu W."/>
            <person name="Liu J."/>
            <person name="Morrice N.A."/>
            <person name="Wettenhall R.E.H."/>
        </authorList>
    </citation>
    <scope>NUCLEOTIDE SEQUENCE [MRNA] OF 138-979</scope>
    <scope>PARTIAL PROTEIN SEQUENCE</scope>
    <scope>ACTIVITY REGULATION</scope>
    <scope>TISSUE SPECIFICITY</scope>
    <source>
        <tissue>Liver</tissue>
        <tissue>Myeloma</tissue>
    </source>
</reference>
<reference key="3">
    <citation type="journal article" date="1997" name="Mol. Cell. Biol.">
        <title>The PRK2 kinase is a potential effector target of both Rho and Rac GTPases and regulates actin cytoskeletal organization.</title>
        <authorList>
            <person name="Vincent S."/>
            <person name="Settleman J."/>
        </authorList>
    </citation>
    <scope>PROTEIN SEQUENCE OF 34-44 AND 255-266</scope>
    <scope>AUTOPHOSPHORYLATION</scope>
    <scope>PHOSPHORYLATION</scope>
    <scope>TISSUE SPECIFICITY</scope>
</reference>
<reference key="4">
    <citation type="journal article" date="2012" name="Nat. Commun.">
        <title>Quantitative maps of protein phosphorylation sites across 14 different rat organs and tissues.</title>
        <authorList>
            <person name="Lundby A."/>
            <person name="Secher A."/>
            <person name="Lage K."/>
            <person name="Nordsborg N.B."/>
            <person name="Dmytriyev A."/>
            <person name="Lundby C."/>
            <person name="Olsen J.V."/>
        </authorList>
    </citation>
    <scope>PHOSPHORYLATION [LARGE SCALE ANALYSIS] AT SER-584 AND THR-959</scope>
    <scope>IDENTIFICATION BY MASS SPECTROMETRY [LARGE SCALE ANALYSIS]</scope>
</reference>
<comment type="function">
    <text evidence="2">PKC-related serine/threonine-protein kinase and Rho/Rac effector protein that participates in specific signal transduction responses in the cell. Plays a role in the regulation of cell cycle progression, actin cytoskeleton assembly, cell migration, cell adhesion, tumor cell invasion and transcription activation signaling processes. Phosphorylates CTTN in hyaluronan-induced astrocytes and hence decreases CTTN ability to associate with filamentous actin. Phosphorylates HDAC5, therefore lead to impair HDAC5 import. Direct RhoA target required for the regulation of the maturation of primordial junctions into apical junction formation in bronchial epithelial cells. Required for G2/M phases of the cell cycle progression and abscission during cytokinesis in a ECT2-dependent manner. Stimulates FYN kinase activity that is required for establishment of skin cell-cell adhesion during keratinocytes differentiation. Regulates epithelial bladder cells speed and direction of movement during cell migration and tumor cell invasion. Inhibits Akt pro-survival-induced kinase activity. Mediates Rho protein-induced transcriptional activation via the c-fos serum response factor (SRF). Involved in the negative regulation of ciliogenesis.</text>
</comment>
<comment type="catalytic activity">
    <reaction>
        <text>L-seryl-[protein] + ATP = O-phospho-L-seryl-[protein] + ADP + H(+)</text>
        <dbReference type="Rhea" id="RHEA:17989"/>
        <dbReference type="Rhea" id="RHEA-COMP:9863"/>
        <dbReference type="Rhea" id="RHEA-COMP:11604"/>
        <dbReference type="ChEBI" id="CHEBI:15378"/>
        <dbReference type="ChEBI" id="CHEBI:29999"/>
        <dbReference type="ChEBI" id="CHEBI:30616"/>
        <dbReference type="ChEBI" id="CHEBI:83421"/>
        <dbReference type="ChEBI" id="CHEBI:456216"/>
        <dbReference type="EC" id="2.7.11.13"/>
    </reaction>
</comment>
<comment type="catalytic activity">
    <reaction>
        <text>L-threonyl-[protein] + ATP = O-phospho-L-threonyl-[protein] + ADP + H(+)</text>
        <dbReference type="Rhea" id="RHEA:46608"/>
        <dbReference type="Rhea" id="RHEA-COMP:11060"/>
        <dbReference type="Rhea" id="RHEA-COMP:11605"/>
        <dbReference type="ChEBI" id="CHEBI:15378"/>
        <dbReference type="ChEBI" id="CHEBI:30013"/>
        <dbReference type="ChEBI" id="CHEBI:30616"/>
        <dbReference type="ChEBI" id="CHEBI:61977"/>
        <dbReference type="ChEBI" id="CHEBI:456216"/>
        <dbReference type="EC" id="2.7.11.13"/>
    </reaction>
</comment>
<comment type="activity regulation">
    <text evidence="2">Kinase activity is activated upon binding to GTP-bound Rho1/Rac1 GTPases. Activated by caspase-3 (CASP3) cleavage during apoptosis. Activated by lipids, particularly cardiolipin and to a lesser extent by other acidic phospholipids and unsaturated fatty acids. Two specific sites, Thr-817 (activation loop of the kinase domain) and Thr-959 (turn motif), need to be phosphorylated for its full activation (By similarity).</text>
</comment>
<comment type="subunit">
    <text evidence="2">Interacts (via the REM repeats) with RHOA (GTP-bound form preferentially) and interacts (via the REM repeats) with RAC1 (GTP-bound form preferentially); the interactions induce its autophosphorylation (By similarity). Interacts with RHOC (By similarity). Interacts with NCK1 (via SH3 domains) and NCK2 (By similarity). Interacts with CD44 (By similarity). Interacts (via C-terminal kinase domain) with PDPK1; the interaction stimulates PDPK1 kinase activity (By similarity). Interacts with MAP3K2; the interaction activates PRK2 kinase activity in a MAP3K2-independent kinase activity (By similarity). Interacts (via C-terminal domain) with AKT1; the interaction occurs with the C-terminal cleavage product of PRK2 in apoptotic cells (By similarity). Interacts (via C-terminus) with PTPN13 (via PDZ 3 domain) (By similarity). Interacts with CDK10 (By similarity).</text>
</comment>
<comment type="subcellular location">
    <subcellularLocation>
        <location evidence="2">Cytoplasm</location>
    </subcellularLocation>
    <subcellularLocation>
        <location evidence="2">Nucleus</location>
    </subcellularLocation>
    <subcellularLocation>
        <location evidence="3">Membrane</location>
    </subcellularLocation>
    <subcellularLocation>
        <location evidence="2">Cell projection</location>
        <location evidence="2">Lamellipodium</location>
    </subcellularLocation>
    <subcellularLocation>
        <location evidence="2">Cytoplasm</location>
        <location evidence="2">Cytoskeleton</location>
    </subcellularLocation>
    <subcellularLocation>
        <location evidence="2">Cleavage furrow</location>
    </subcellularLocation>
    <subcellularLocation>
        <location evidence="2">Midbody</location>
    </subcellularLocation>
    <subcellularLocation>
        <location evidence="2">Cell junction</location>
    </subcellularLocation>
    <text evidence="2">Colocalizes with PTPN13 in lamellipodia-like structures, regions of large actin turnover. Accumulates during telophase at the cleavage furrow and concentrates finally around the midbody in cytokinesis. Recruited to nascent cell-cell contacts at the apical surface of cells.</text>
</comment>
<comment type="tissue specificity">
    <text evidence="10 11">Expressed in liver (at protein level).</text>
</comment>
<comment type="domain">
    <text evidence="1">The N-terminal regioninterferes with the interaction between AKT1 and the C-terminal regionof PKN2.</text>
</comment>
<comment type="domain">
    <text>The C1 domain does not bind the diacylglycerol (DAG).</text>
</comment>
<comment type="domain">
    <text evidence="1">The apoptotic C-terminal cleavage product inhibits EGF-induced kinase activity of AKT1 phosphorylation at 'Thr-308' and 'Ser-473' sites, PDPK1 autophosphorylation and kinases PRKCD and PRKCZ phosphorylations.</text>
</comment>
<comment type="PTM">
    <text evidence="2 11">Phosphorylated during mitosis (By similarity). Autophosphorylated. Phosphorylated. Binding to Rho and Rac promotes autophosphorylation and phosphorylation on serine and threonine residues. Phosphorylated by CDK10 (By similarity).</text>
</comment>
<comment type="PTM">
    <text evidence="1">Proteolytically cleaved by caspase-3 during the induction of apoptotic cell death (By similarity). Activated by limited proteolysis with trypsin.</text>
</comment>
<comment type="similarity">
    <text evidence="12">Belongs to the protein kinase superfamily. AGC Ser/Thr protein kinase family. PKC subfamily.</text>
</comment>
<name>PKN2_RAT</name>
<feature type="chain" id="PRO_0000055724" description="Serine/threonine-protein kinase N2">
    <location>
        <begin position="1"/>
        <end position="985"/>
    </location>
</feature>
<feature type="domain" description="REM-1 1" evidence="7">
    <location>
        <begin position="33"/>
        <end position="109"/>
    </location>
</feature>
<feature type="domain" description="REM-1 2" evidence="7">
    <location>
        <begin position="121"/>
        <end position="204"/>
    </location>
</feature>
<feature type="domain" description="REM-1 3" evidence="7">
    <location>
        <begin position="207"/>
        <end position="286"/>
    </location>
</feature>
<feature type="domain" description="C2" evidence="4">
    <location>
        <begin position="354"/>
        <end position="474"/>
    </location>
</feature>
<feature type="domain" description="Protein kinase" evidence="5">
    <location>
        <begin position="658"/>
        <end position="917"/>
    </location>
</feature>
<feature type="domain" description="AGC-kinase C-terminal" evidence="6">
    <location>
        <begin position="918"/>
        <end position="985"/>
    </location>
</feature>
<feature type="region of interest" description="Disordered" evidence="9">
    <location>
        <begin position="111"/>
        <end position="136"/>
    </location>
</feature>
<feature type="region of interest" description="Disordered" evidence="9">
    <location>
        <begin position="352"/>
        <end position="383"/>
    </location>
</feature>
<feature type="region of interest" description="Necessary to rescue apical junction formation" evidence="1">
    <location>
        <begin position="383"/>
        <end position="464"/>
    </location>
</feature>
<feature type="region of interest" description="Disordered" evidence="9">
    <location>
        <begin position="570"/>
        <end position="590"/>
    </location>
</feature>
<feature type="region of interest" description="Necessary for the catalytic activity" evidence="1">
    <location>
        <begin position="918"/>
        <end position="978"/>
    </location>
</feature>
<feature type="region of interest" description="Negatively regulates the responsiveness of the catalytic activity by cardiolipin and is required for optimal activation by the GTP-bound RhoA" evidence="1">
    <location>
        <begin position="979"/>
        <end position="985"/>
    </location>
</feature>
<feature type="compositionally biased region" description="Low complexity" evidence="9">
    <location>
        <begin position="121"/>
        <end position="136"/>
    </location>
</feature>
<feature type="compositionally biased region" description="Low complexity" evidence="9">
    <location>
        <begin position="366"/>
        <end position="382"/>
    </location>
</feature>
<feature type="active site" description="Proton acceptor" evidence="5 8">
    <location>
        <position position="783"/>
    </location>
</feature>
<feature type="binding site" evidence="5">
    <location>
        <begin position="664"/>
        <end position="672"/>
    </location>
    <ligand>
        <name>ATP</name>
        <dbReference type="ChEBI" id="CHEBI:30616"/>
    </ligand>
</feature>
<feature type="binding site" evidence="5">
    <location>
        <position position="687"/>
    </location>
    <ligand>
        <name>ATP</name>
        <dbReference type="ChEBI" id="CHEBI:30616"/>
    </ligand>
</feature>
<feature type="site" description="Cleavage; by caspase-3" evidence="1">
    <location>
        <begin position="117"/>
        <end position="118"/>
    </location>
</feature>
<feature type="site" description="Cleavage; by caspase-3" evidence="1">
    <location>
        <begin position="701"/>
        <end position="702"/>
    </location>
</feature>
<feature type="modified residue" description="N6-acetyllysine" evidence="3">
    <location>
        <position position="77"/>
    </location>
</feature>
<feature type="modified residue" description="Phosphoserine" evidence="2">
    <location>
        <position position="110"/>
    </location>
</feature>
<feature type="modified residue" description="Phosphothreonine" evidence="2">
    <location>
        <position position="121"/>
    </location>
</feature>
<feature type="modified residue" description="Phosphothreonine" evidence="2">
    <location>
        <position position="124"/>
    </location>
</feature>
<feature type="modified residue" description="Phosphoserine" evidence="2">
    <location>
        <position position="303"/>
    </location>
</feature>
<feature type="modified residue" description="Phosphoserine" evidence="2">
    <location>
        <position position="307"/>
    </location>
</feature>
<feature type="modified residue" description="Phosphoserine" evidence="2">
    <location>
        <position position="361"/>
    </location>
</feature>
<feature type="modified residue" description="Phosphoserine" evidence="2">
    <location>
        <position position="363"/>
    </location>
</feature>
<feature type="modified residue" description="Phosphoserine" evidence="2">
    <location>
        <position position="536"/>
    </location>
</feature>
<feature type="modified residue" description="Phosphoserine" evidence="13">
    <location>
        <position position="584"/>
    </location>
</feature>
<feature type="modified residue" description="Phosphoserine" evidence="3">
    <location>
        <position position="621"/>
    </location>
</feature>
<feature type="modified residue" description="Phosphoserine" evidence="2">
    <location>
        <position position="632"/>
    </location>
</feature>
<feature type="modified residue" description="Phosphothreonine; by PDPK1" evidence="2">
    <location>
        <position position="817"/>
    </location>
</feature>
<feature type="modified residue" description="Phosphoserine" evidence="2">
    <location>
        <position position="953"/>
    </location>
</feature>
<feature type="modified residue" description="Phosphothreonine" evidence="13">
    <location>
        <position position="959"/>
    </location>
</feature>